<organism>
    <name type="scientific">Arabidopsis thaliana</name>
    <name type="common">Mouse-ear cress</name>
    <dbReference type="NCBI Taxonomy" id="3702"/>
    <lineage>
        <taxon>Eukaryota</taxon>
        <taxon>Viridiplantae</taxon>
        <taxon>Streptophyta</taxon>
        <taxon>Embryophyta</taxon>
        <taxon>Tracheophyta</taxon>
        <taxon>Spermatophyta</taxon>
        <taxon>Magnoliopsida</taxon>
        <taxon>eudicotyledons</taxon>
        <taxon>Gunneridae</taxon>
        <taxon>Pentapetalae</taxon>
        <taxon>rosids</taxon>
        <taxon>malvids</taxon>
        <taxon>Brassicales</taxon>
        <taxon>Brassicaceae</taxon>
        <taxon>Camelineae</taxon>
        <taxon>Arabidopsis</taxon>
    </lineage>
</organism>
<protein>
    <recommendedName>
        <fullName evidence="12">Malate dehydrogenase 2, peroxisomal</fullName>
        <ecNumber>1.1.1.37</ecNumber>
    </recommendedName>
    <alternativeName>
        <fullName evidence="11">Microbody NAD-dependent malate dehydrogenase</fullName>
        <shortName evidence="11">mbNAD-MDH</shortName>
    </alternativeName>
    <alternativeName>
        <fullName evidence="12">Peroxisomal NAD-dependent malate dehydrogenase 2</fullName>
        <shortName evidence="10">pxNAD-MDH2</shortName>
    </alternativeName>
    <alternativeName>
        <fullName evidence="10">Peroxisomal malate dehydrogenase 2</fullName>
        <shortName evidence="12">Peroxisomal MDH2</shortName>
    </alternativeName>
</protein>
<dbReference type="EC" id="1.1.1.37"/>
<dbReference type="EMBL" id="AJ131206">
    <property type="protein sequence ID" value="CAA10321.1"/>
    <property type="molecule type" value="mRNA"/>
</dbReference>
<dbReference type="EMBL" id="AB020752">
    <property type="protein sequence ID" value="BAB09521.1"/>
    <property type="molecule type" value="Genomic_DNA"/>
</dbReference>
<dbReference type="EMBL" id="AL353994">
    <property type="protein sequence ID" value="CAB89364.1"/>
    <property type="molecule type" value="Genomic_DNA"/>
</dbReference>
<dbReference type="EMBL" id="CP002688">
    <property type="protein sequence ID" value="AED91422.1"/>
    <property type="molecule type" value="Genomic_DNA"/>
</dbReference>
<dbReference type="EMBL" id="AF428373">
    <property type="protein sequence ID" value="AAL16303.1"/>
    <property type="molecule type" value="mRNA"/>
</dbReference>
<dbReference type="EMBL" id="AY037252">
    <property type="protein sequence ID" value="AAK59853.1"/>
    <property type="molecule type" value="mRNA"/>
</dbReference>
<dbReference type="EMBL" id="AY057682">
    <property type="protein sequence ID" value="AAL15313.1"/>
    <property type="molecule type" value="mRNA"/>
</dbReference>
<dbReference type="EMBL" id="AY077653">
    <property type="protein sequence ID" value="AAL76131.1"/>
    <property type="molecule type" value="mRNA"/>
</dbReference>
<dbReference type="PIR" id="PA0040">
    <property type="entry name" value="PA0040"/>
</dbReference>
<dbReference type="PIR" id="T49932">
    <property type="entry name" value="T49932"/>
</dbReference>
<dbReference type="RefSeq" id="NP_196528.1">
    <molecule id="Q9ZP05-1"/>
    <property type="nucleotide sequence ID" value="NM_121003.4"/>
</dbReference>
<dbReference type="SMR" id="Q9ZP05"/>
<dbReference type="BioGRID" id="16103">
    <property type="interactions" value="1"/>
</dbReference>
<dbReference type="FunCoup" id="Q9ZP05">
    <property type="interactions" value="3546"/>
</dbReference>
<dbReference type="STRING" id="3702.Q9ZP05"/>
<dbReference type="iPTMnet" id="Q9ZP05"/>
<dbReference type="MetOSite" id="Q9ZP05"/>
<dbReference type="PaxDb" id="3702-AT5G09660.4"/>
<dbReference type="ProteomicsDB" id="238770">
    <molecule id="Q9ZP05-1"/>
</dbReference>
<dbReference type="EnsemblPlants" id="AT5G09660.1">
    <molecule id="Q9ZP05-1"/>
    <property type="protein sequence ID" value="AT5G09660.1"/>
    <property type="gene ID" value="AT5G09660"/>
</dbReference>
<dbReference type="GeneID" id="830825"/>
<dbReference type="Gramene" id="AT5G09660.1">
    <molecule id="Q9ZP05-1"/>
    <property type="protein sequence ID" value="AT5G09660.1"/>
    <property type="gene ID" value="AT5G09660"/>
</dbReference>
<dbReference type="KEGG" id="ath:AT5G09660"/>
<dbReference type="Araport" id="AT5G09660"/>
<dbReference type="TAIR" id="AT5G09660">
    <property type="gene designation" value="PMDH2"/>
</dbReference>
<dbReference type="eggNOG" id="KOG1494">
    <property type="taxonomic scope" value="Eukaryota"/>
</dbReference>
<dbReference type="HOGENOM" id="CLU_047181_0_2_1"/>
<dbReference type="InParanoid" id="Q9ZP05"/>
<dbReference type="OrthoDB" id="4069699at2759"/>
<dbReference type="PhylomeDB" id="Q9ZP05"/>
<dbReference type="BioCyc" id="ARA:AT5G09660-MONOMER"/>
<dbReference type="BioCyc" id="MetaCyc:AT5G09660-MONOMER"/>
<dbReference type="CD-CODE" id="4299E36E">
    <property type="entry name" value="Nucleolus"/>
</dbReference>
<dbReference type="PRO" id="PR:Q9ZP05"/>
<dbReference type="Proteomes" id="UP000006548">
    <property type="component" value="Chromosome 5"/>
</dbReference>
<dbReference type="ExpressionAtlas" id="Q9ZP05">
    <property type="expression patterns" value="baseline and differential"/>
</dbReference>
<dbReference type="GO" id="GO:0005777">
    <property type="term" value="C:peroxisome"/>
    <property type="evidence" value="ECO:0000314"/>
    <property type="project" value="UniProtKB"/>
</dbReference>
<dbReference type="GO" id="GO:0030060">
    <property type="term" value="F:L-malate dehydrogenase (NAD+) activity"/>
    <property type="evidence" value="ECO:0007669"/>
    <property type="project" value="UniProtKB-EC"/>
</dbReference>
<dbReference type="GO" id="GO:0006097">
    <property type="term" value="P:glyoxylate cycle"/>
    <property type="evidence" value="ECO:0007669"/>
    <property type="project" value="UniProtKB-KW"/>
</dbReference>
<dbReference type="GO" id="GO:0006108">
    <property type="term" value="P:malate metabolic process"/>
    <property type="evidence" value="ECO:0007669"/>
    <property type="project" value="InterPro"/>
</dbReference>
<dbReference type="GO" id="GO:0031998">
    <property type="term" value="P:regulation of fatty acid beta-oxidation"/>
    <property type="evidence" value="ECO:0000315"/>
    <property type="project" value="UniProtKB"/>
</dbReference>
<dbReference type="GO" id="GO:0080093">
    <property type="term" value="P:regulation of photorespiration"/>
    <property type="evidence" value="ECO:0000315"/>
    <property type="project" value="UniProtKB"/>
</dbReference>
<dbReference type="GO" id="GO:0006099">
    <property type="term" value="P:tricarboxylic acid cycle"/>
    <property type="evidence" value="ECO:0007669"/>
    <property type="project" value="UniProtKB-KW"/>
</dbReference>
<dbReference type="CDD" id="cd01337">
    <property type="entry name" value="MDH_glyoxysomal_mitochondrial"/>
    <property type="match status" value="1"/>
</dbReference>
<dbReference type="FunFam" id="3.40.50.720:FF:000013">
    <property type="entry name" value="Malate dehydrogenase"/>
    <property type="match status" value="1"/>
</dbReference>
<dbReference type="FunFam" id="3.90.110.10:FF:000001">
    <property type="entry name" value="Malate dehydrogenase"/>
    <property type="match status" value="1"/>
</dbReference>
<dbReference type="Gene3D" id="3.90.110.10">
    <property type="entry name" value="Lactate dehydrogenase/glycoside hydrolase, family 4, C-terminal"/>
    <property type="match status" value="1"/>
</dbReference>
<dbReference type="Gene3D" id="3.40.50.720">
    <property type="entry name" value="NAD(P)-binding Rossmann-like Domain"/>
    <property type="match status" value="1"/>
</dbReference>
<dbReference type="InterPro" id="IPR001557">
    <property type="entry name" value="L-lactate/malate_DH"/>
</dbReference>
<dbReference type="InterPro" id="IPR022383">
    <property type="entry name" value="Lactate/malate_DH_C"/>
</dbReference>
<dbReference type="InterPro" id="IPR001236">
    <property type="entry name" value="Lactate/malate_DH_N"/>
</dbReference>
<dbReference type="InterPro" id="IPR015955">
    <property type="entry name" value="Lactate_DH/Glyco_Ohase_4_C"/>
</dbReference>
<dbReference type="InterPro" id="IPR001252">
    <property type="entry name" value="Malate_DH_AS"/>
</dbReference>
<dbReference type="InterPro" id="IPR010097">
    <property type="entry name" value="Malate_DH_type1"/>
</dbReference>
<dbReference type="InterPro" id="IPR036291">
    <property type="entry name" value="NAD(P)-bd_dom_sf"/>
</dbReference>
<dbReference type="NCBIfam" id="TIGR01772">
    <property type="entry name" value="MDH_euk_gproteo"/>
    <property type="match status" value="1"/>
</dbReference>
<dbReference type="PANTHER" id="PTHR11540">
    <property type="entry name" value="MALATE AND LACTATE DEHYDROGENASE"/>
    <property type="match status" value="1"/>
</dbReference>
<dbReference type="PANTHER" id="PTHR11540:SF52">
    <property type="entry name" value="MALATE DEHYDROGENASE 2, PEROXISOMAL"/>
    <property type="match status" value="1"/>
</dbReference>
<dbReference type="Pfam" id="PF02866">
    <property type="entry name" value="Ldh_1_C"/>
    <property type="match status" value="1"/>
</dbReference>
<dbReference type="Pfam" id="PF00056">
    <property type="entry name" value="Ldh_1_N"/>
    <property type="match status" value="1"/>
</dbReference>
<dbReference type="PIRSF" id="PIRSF000102">
    <property type="entry name" value="Lac_mal_DH"/>
    <property type="match status" value="1"/>
</dbReference>
<dbReference type="SUPFAM" id="SSF56327">
    <property type="entry name" value="LDH C-terminal domain-like"/>
    <property type="match status" value="1"/>
</dbReference>
<dbReference type="SUPFAM" id="SSF51735">
    <property type="entry name" value="NAD(P)-binding Rossmann-fold domains"/>
    <property type="match status" value="1"/>
</dbReference>
<dbReference type="PROSITE" id="PS00068">
    <property type="entry name" value="MDH"/>
    <property type="match status" value="1"/>
</dbReference>
<reference key="1">
    <citation type="journal article" date="1998" name="J. Biol. Chem.">
        <title>A novel, non-redox-regulated NAD-dependent malate dehydrogenase from chloroplasts of Arabidopsis thaliana L.</title>
        <authorList>
            <person name="Berkemeyer M."/>
            <person name="Scheibe R."/>
            <person name="Ocheretina O."/>
        </authorList>
    </citation>
    <scope>NUCLEOTIDE SEQUENCE [MRNA]</scope>
    <source>
        <strain>cv. Columbia</strain>
    </source>
</reference>
<reference key="2">
    <citation type="journal article" date="1999" name="DNA Res.">
        <title>Structural analysis of Arabidopsis thaliana chromosome 5. IX. Sequence features of the regions of 1,011,550 bp covered by seventeen P1 and TAC clones.</title>
        <authorList>
            <person name="Kaneko T."/>
            <person name="Katoh T."/>
            <person name="Sato S."/>
            <person name="Nakamura Y."/>
            <person name="Asamizu E."/>
            <person name="Kotani H."/>
            <person name="Miyajima N."/>
            <person name="Tabata S."/>
        </authorList>
    </citation>
    <scope>NUCLEOTIDE SEQUENCE [LARGE SCALE GENOMIC DNA]</scope>
    <source>
        <strain>cv. Columbia</strain>
    </source>
</reference>
<reference key="3">
    <citation type="journal article" date="2000" name="Nature">
        <title>Sequence and analysis of chromosome 5 of the plant Arabidopsis thaliana.</title>
        <authorList>
            <person name="Tabata S."/>
            <person name="Kaneko T."/>
            <person name="Nakamura Y."/>
            <person name="Kotani H."/>
            <person name="Kato T."/>
            <person name="Asamizu E."/>
            <person name="Miyajima N."/>
            <person name="Sasamoto S."/>
            <person name="Kimura T."/>
            <person name="Hosouchi T."/>
            <person name="Kawashima K."/>
            <person name="Kohara M."/>
            <person name="Matsumoto M."/>
            <person name="Matsuno A."/>
            <person name="Muraki A."/>
            <person name="Nakayama S."/>
            <person name="Nakazaki N."/>
            <person name="Naruo K."/>
            <person name="Okumura S."/>
            <person name="Shinpo S."/>
            <person name="Takeuchi C."/>
            <person name="Wada T."/>
            <person name="Watanabe A."/>
            <person name="Yamada M."/>
            <person name="Yasuda M."/>
            <person name="Sato S."/>
            <person name="de la Bastide M."/>
            <person name="Huang E."/>
            <person name="Spiegel L."/>
            <person name="Gnoj L."/>
            <person name="O'Shaughnessy A."/>
            <person name="Preston R."/>
            <person name="Habermann K."/>
            <person name="Murray J."/>
            <person name="Johnson D."/>
            <person name="Rohlfing T."/>
            <person name="Nelson J."/>
            <person name="Stoneking T."/>
            <person name="Pepin K."/>
            <person name="Spieth J."/>
            <person name="Sekhon M."/>
            <person name="Armstrong J."/>
            <person name="Becker M."/>
            <person name="Belter E."/>
            <person name="Cordum H."/>
            <person name="Cordes M."/>
            <person name="Courtney L."/>
            <person name="Courtney W."/>
            <person name="Dante M."/>
            <person name="Du H."/>
            <person name="Edwards J."/>
            <person name="Fryman J."/>
            <person name="Haakensen B."/>
            <person name="Lamar E."/>
            <person name="Latreille P."/>
            <person name="Leonard S."/>
            <person name="Meyer R."/>
            <person name="Mulvaney E."/>
            <person name="Ozersky P."/>
            <person name="Riley A."/>
            <person name="Strowmatt C."/>
            <person name="Wagner-McPherson C."/>
            <person name="Wollam A."/>
            <person name="Yoakum M."/>
            <person name="Bell M."/>
            <person name="Dedhia N."/>
            <person name="Parnell L."/>
            <person name="Shah R."/>
            <person name="Rodriguez M."/>
            <person name="Hoon See L."/>
            <person name="Vil D."/>
            <person name="Baker J."/>
            <person name="Kirchoff K."/>
            <person name="Toth K."/>
            <person name="King L."/>
            <person name="Bahret A."/>
            <person name="Miller B."/>
            <person name="Marra M.A."/>
            <person name="Martienssen R."/>
            <person name="McCombie W.R."/>
            <person name="Wilson R.K."/>
            <person name="Murphy G."/>
            <person name="Bancroft I."/>
            <person name="Volckaert G."/>
            <person name="Wambutt R."/>
            <person name="Duesterhoeft A."/>
            <person name="Stiekema W."/>
            <person name="Pohl T."/>
            <person name="Entian K.-D."/>
            <person name="Terryn N."/>
            <person name="Hartley N."/>
            <person name="Bent E."/>
            <person name="Johnson S."/>
            <person name="Langham S.-A."/>
            <person name="McCullagh B."/>
            <person name="Robben J."/>
            <person name="Grymonprez B."/>
            <person name="Zimmermann W."/>
            <person name="Ramsperger U."/>
            <person name="Wedler H."/>
            <person name="Balke K."/>
            <person name="Wedler E."/>
            <person name="Peters S."/>
            <person name="van Staveren M."/>
            <person name="Dirkse W."/>
            <person name="Mooijman P."/>
            <person name="Klein Lankhorst R."/>
            <person name="Weitzenegger T."/>
            <person name="Bothe G."/>
            <person name="Rose M."/>
            <person name="Hauf J."/>
            <person name="Berneiser S."/>
            <person name="Hempel S."/>
            <person name="Feldpausch M."/>
            <person name="Lamberth S."/>
            <person name="Villarroel R."/>
            <person name="Gielen J."/>
            <person name="Ardiles W."/>
            <person name="Bents O."/>
            <person name="Lemcke K."/>
            <person name="Kolesov G."/>
            <person name="Mayer K.F.X."/>
            <person name="Rudd S."/>
            <person name="Schoof H."/>
            <person name="Schueller C."/>
            <person name="Zaccaria P."/>
            <person name="Mewes H.-W."/>
            <person name="Bevan M."/>
            <person name="Fransz P.F."/>
        </authorList>
    </citation>
    <scope>NUCLEOTIDE SEQUENCE [LARGE SCALE GENOMIC DNA]</scope>
    <source>
        <strain>cv. Columbia</strain>
    </source>
</reference>
<reference key="4">
    <citation type="journal article" date="2017" name="Plant J.">
        <title>Araport11: a complete reannotation of the Arabidopsis thaliana reference genome.</title>
        <authorList>
            <person name="Cheng C.Y."/>
            <person name="Krishnakumar V."/>
            <person name="Chan A.P."/>
            <person name="Thibaud-Nissen F."/>
            <person name="Schobel S."/>
            <person name="Town C.D."/>
        </authorList>
    </citation>
    <scope>GENOME REANNOTATION</scope>
    <source>
        <strain>cv. Columbia</strain>
    </source>
</reference>
<reference key="5">
    <citation type="journal article" date="2003" name="Science">
        <title>Empirical analysis of transcriptional activity in the Arabidopsis genome.</title>
        <authorList>
            <person name="Yamada K."/>
            <person name="Lim J."/>
            <person name="Dale J.M."/>
            <person name="Chen H."/>
            <person name="Shinn P."/>
            <person name="Palm C.J."/>
            <person name="Southwick A.M."/>
            <person name="Wu H.C."/>
            <person name="Kim C.J."/>
            <person name="Nguyen M."/>
            <person name="Pham P.K."/>
            <person name="Cheuk R.F."/>
            <person name="Karlin-Newmann G."/>
            <person name="Liu S.X."/>
            <person name="Lam B."/>
            <person name="Sakano H."/>
            <person name="Wu T."/>
            <person name="Yu G."/>
            <person name="Miranda M."/>
            <person name="Quach H.L."/>
            <person name="Tripp M."/>
            <person name="Chang C.H."/>
            <person name="Lee J.M."/>
            <person name="Toriumi M.J."/>
            <person name="Chan M.M."/>
            <person name="Tang C.C."/>
            <person name="Onodera C.S."/>
            <person name="Deng J.M."/>
            <person name="Akiyama K."/>
            <person name="Ansari Y."/>
            <person name="Arakawa T."/>
            <person name="Banh J."/>
            <person name="Banno F."/>
            <person name="Bowser L."/>
            <person name="Brooks S.Y."/>
            <person name="Carninci P."/>
            <person name="Chao Q."/>
            <person name="Choy N."/>
            <person name="Enju A."/>
            <person name="Goldsmith A.D."/>
            <person name="Gurjal M."/>
            <person name="Hansen N.F."/>
            <person name="Hayashizaki Y."/>
            <person name="Johnson-Hopson C."/>
            <person name="Hsuan V.W."/>
            <person name="Iida K."/>
            <person name="Karnes M."/>
            <person name="Khan S."/>
            <person name="Koesema E."/>
            <person name="Ishida J."/>
            <person name="Jiang P.X."/>
            <person name="Jones T."/>
            <person name="Kawai J."/>
            <person name="Kamiya A."/>
            <person name="Meyers C."/>
            <person name="Nakajima M."/>
            <person name="Narusaka M."/>
            <person name="Seki M."/>
            <person name="Sakurai T."/>
            <person name="Satou M."/>
            <person name="Tamse R."/>
            <person name="Vaysberg M."/>
            <person name="Wallender E.K."/>
            <person name="Wong C."/>
            <person name="Yamamura Y."/>
            <person name="Yuan S."/>
            <person name="Shinozaki K."/>
            <person name="Davis R.W."/>
            <person name="Theologis A."/>
            <person name="Ecker J.R."/>
        </authorList>
    </citation>
    <scope>NUCLEOTIDE SEQUENCE [LARGE SCALE MRNA]</scope>
    <source>
        <strain>cv. Columbia</strain>
    </source>
</reference>
<reference key="6">
    <citation type="journal article" date="2007" name="Plant Cell">
        <title>Proteome analysis of Arabidopsis leaf peroxisomes reveals novel targeting peptides, metabolic pathways, and defense mechanisms.</title>
        <authorList>
            <person name="Reumann S."/>
            <person name="Babujee L."/>
            <person name="Ma C."/>
            <person name="Wienkoop S."/>
            <person name="Siemsen T."/>
            <person name="Antonicelli G.E."/>
            <person name="Rasche N."/>
            <person name="Lueder F."/>
            <person name="Weckwerth W."/>
            <person name="Jahn O."/>
        </authorList>
    </citation>
    <scope>IDENTIFICATION BY MASS SPECTROMETRY</scope>
</reference>
<reference key="7">
    <citation type="journal article" date="2007" name="Plant J.">
        <title>Arabidopsis peroxisomal malate dehydrogenase functions in beta-oxidation but not in the glyoxylate cycle.</title>
        <authorList>
            <person name="Pracharoenwattana I."/>
            <person name="Cornah J.E."/>
            <person name="Smith S.M."/>
        </authorList>
    </citation>
    <scope>FUNCTION</scope>
    <scope>SUBCELLULAR LOCATION</scope>
    <scope>DISRUPTION PHENOTYPE</scope>
</reference>
<reference key="8">
    <citation type="journal article" date="2008" name="Plant Physiol.">
        <title>Peroxisomal malate dehydrogenase is not essential for photorespiration in Arabidopsis but its absence causes an increase in the stoichiometry of photorespiratory CO2 release.</title>
        <authorList>
            <person name="Cousins A.B."/>
            <person name="Pracharoenwattana I."/>
            <person name="Zhou W."/>
            <person name="Smith S.M."/>
            <person name="Badger M.R."/>
        </authorList>
    </citation>
    <scope>FUNCTION</scope>
</reference>
<reference key="9">
    <citation type="journal article" date="2010" name="Plant Mol. Biol.">
        <title>Fatty acid beta-oxidation in germinating Arabidopsis seeds is supported by peroxisomal hydroxypyruvate reductase when malate dehydrogenase is absent.</title>
        <authorList>
            <person name="Pracharoenwattana I."/>
            <person name="Zhou W."/>
            <person name="Smith S.M."/>
        </authorList>
    </citation>
    <scope>FUNCTION</scope>
</reference>
<reference key="10">
    <citation type="journal article" date="2010" name="Plant Physiol.">
        <title>Mitochondrial malate dehydrogenase lowers leaf respiration and alters photorespiration and plant growth in Arabidopsis.</title>
        <authorList>
            <person name="Tomaz T."/>
            <person name="Bagard M."/>
            <person name="Pracharoenwattana I."/>
            <person name="Linden P."/>
            <person name="Lee C.P."/>
            <person name="Carroll A.J."/>
            <person name="Stroeher E."/>
            <person name="Smith S.M."/>
            <person name="Gardestroem P."/>
            <person name="Millar A.H."/>
        </authorList>
    </citation>
    <scope>FUNCTION</scope>
    <scope>TISSUE SPECIFICITY</scope>
</reference>
<proteinExistence type="evidence at protein level"/>
<feature type="chain" id="PRO_0000018634" description="Malate dehydrogenase 2, peroxisomal">
    <location>
        <begin position="1"/>
        <end position="354"/>
    </location>
</feature>
<feature type="region of interest" description="Peroxisomal targeting signal PTS2" evidence="13">
    <location>
        <begin position="10"/>
        <end position="18"/>
    </location>
</feature>
<feature type="active site" description="Proton acceptor" evidence="2">
    <location>
        <position position="218"/>
    </location>
</feature>
<feature type="binding site" evidence="3">
    <location>
        <begin position="49"/>
        <end position="55"/>
    </location>
    <ligand>
        <name>NAD(+)</name>
        <dbReference type="ChEBI" id="CHEBI:57540"/>
    </ligand>
</feature>
<feature type="binding site" evidence="3">
    <location>
        <position position="75"/>
    </location>
    <ligand>
        <name>NAD(+)</name>
        <dbReference type="ChEBI" id="CHEBI:57540"/>
    </ligand>
</feature>
<feature type="binding site" evidence="2">
    <location>
        <position position="122"/>
    </location>
    <ligand>
        <name>substrate</name>
    </ligand>
</feature>
<feature type="binding site" evidence="2">
    <location>
        <position position="128"/>
    </location>
    <ligand>
        <name>substrate</name>
    </ligand>
</feature>
<feature type="binding site" evidence="3">
    <location>
        <position position="135"/>
    </location>
    <ligand>
        <name>NAD(+)</name>
        <dbReference type="ChEBI" id="CHEBI:57540"/>
    </ligand>
</feature>
<feature type="binding site" evidence="3">
    <location>
        <begin position="158"/>
        <end position="160"/>
    </location>
    <ligand>
        <name>NAD(+)</name>
        <dbReference type="ChEBI" id="CHEBI:57540"/>
    </ligand>
</feature>
<feature type="binding site" evidence="2">
    <location>
        <position position="160"/>
    </location>
    <ligand>
        <name>substrate</name>
    </ligand>
</feature>
<feature type="binding site" evidence="2">
    <location>
        <position position="194"/>
    </location>
    <ligand>
        <name>substrate</name>
    </ligand>
</feature>
<feature type="binding site" evidence="3">
    <location>
        <position position="269"/>
    </location>
    <ligand>
        <name>NAD(+)</name>
        <dbReference type="ChEBI" id="CHEBI:57540"/>
    </ligand>
</feature>
<feature type="sequence conflict" description="In Ref. 5; AAL15313." evidence="12" ref="5">
    <original>V</original>
    <variation>I</variation>
    <location>
        <position position="166"/>
    </location>
</feature>
<sequence length="354" mass="37369">MEFRGDANQRIARISAHLTPQMEAKNSVIGRENCRAKGGNPGFKVAILGAAGGIGQSLSLLMKMNPLVSLLHLYDVVNAPGVTADVSHMDTGAVVRGFLGAKQLEDALTGMDLVIIPAGIPRKPGMTRDDLFKINAGIVKTLCEGVAKCCPNAIVNLISNPVNSTVPIAAEVFKKAGTYDPKKLLGVTTLDVARANTFVAEVLGLDPREVDVPVVGGHAGVTILPLLSQVKPPSSFTPQEIEYLTNRIQNGGTEVVEAKAGAGSATLSMAYAAAKFADACLRGLRGDANVVECSFVASQVTELAFFATKVRLGRTGAEEVYQLGPLNEYERIGLEKAKDELAGSIQKGVEFIRK</sequence>
<accession>Q9ZP05</accession>
<accession>Q93ZA7</accession>
<name>MDHX2_ARATH</name>
<gene>
    <name evidence="9" type="primary">PMDH2</name>
    <name type="ordered locus">At5g09660</name>
    <name type="ORF">F17I14_150</name>
    <name type="ORF">MTH16.8</name>
</gene>
<evidence type="ECO:0000250" key="1"/>
<evidence type="ECO:0000250" key="2">
    <source>
        <dbReference type="UniProtKB" id="P11708"/>
    </source>
</evidence>
<evidence type="ECO:0000250" key="3">
    <source>
        <dbReference type="UniProtKB" id="P40926"/>
    </source>
</evidence>
<evidence type="ECO:0000255" key="4">
    <source>
        <dbReference type="PROSITE-ProRule" id="PRU10004"/>
    </source>
</evidence>
<evidence type="ECO:0000269" key="5">
    <source>
    </source>
</evidence>
<evidence type="ECO:0000269" key="6">
    <source>
    </source>
</evidence>
<evidence type="ECO:0000269" key="7">
    <source>
    </source>
</evidence>
<evidence type="ECO:0000269" key="8">
    <source>
    </source>
</evidence>
<evidence type="ECO:0000303" key="9">
    <source>
    </source>
</evidence>
<evidence type="ECO:0000303" key="10">
    <source>
    </source>
</evidence>
<evidence type="ECO:0000303" key="11">
    <source>
    </source>
</evidence>
<evidence type="ECO:0000305" key="12"/>
<evidence type="ECO:0000305" key="13">
    <source>
    </source>
</evidence>
<evidence type="ECO:0000305" key="14">
    <source>
    </source>
</evidence>
<comment type="function">
    <text evidence="5 6 7 14">Catalyzes a reversible NAD-dependent dehydrogenase reaction involved in central metabolism and redox homeostasis between organelle compartments (Probable). Peroxisomal NAD-dependent malate dehydrogenase involved in fatty acid beta-oxidation. Reoxidizes NADH from the beta-oxidation and provides NAD for the conversion of fatty acyl-CoA to acetyl-CoA. Does not participate directly in the glyoxylate cycle (PubMed:17376163, PubMed:19812894). Required for maintenance of photosynthetic rates under photorespiratory conditions, and carbon flow during photorespiration. Supplies NADH reductant to the peroxisomal hydroxypyruvate reductase (HPR), which reduces hydroxypyruvate into glycerate in the photorespiratory cycle (PubMed:18685043).</text>
</comment>
<comment type="catalytic activity">
    <reaction evidence="4">
        <text>(S)-malate + NAD(+) = oxaloacetate + NADH + H(+)</text>
        <dbReference type="Rhea" id="RHEA:21432"/>
        <dbReference type="ChEBI" id="CHEBI:15378"/>
        <dbReference type="ChEBI" id="CHEBI:15589"/>
        <dbReference type="ChEBI" id="CHEBI:16452"/>
        <dbReference type="ChEBI" id="CHEBI:57540"/>
        <dbReference type="ChEBI" id="CHEBI:57945"/>
        <dbReference type="EC" id="1.1.1.37"/>
    </reaction>
</comment>
<comment type="subunit">
    <text evidence="1">Homodimer.</text>
</comment>
<comment type="subcellular location">
    <subcellularLocation>
        <location evidence="5">Peroxisome</location>
    </subcellularLocation>
</comment>
<comment type="alternative products">
    <event type="alternative splicing"/>
    <isoform>
        <id>Q9ZP05-1</id>
        <name>1</name>
        <sequence type="displayed"/>
    </isoform>
    <text>A number of isoforms are produced. According to EST sequences.</text>
</comment>
<comment type="tissue specificity">
    <text evidence="8">Expressed in rosette leaves.</text>
</comment>
<comment type="disruption phenotype">
    <text evidence="5">No visible phenotype under normal growth conditions, but the double mutant plants pmdh1 and pmdh2 show seedling growth arrest 5 days after seed imbibition.</text>
</comment>
<comment type="similarity">
    <text evidence="12">Belongs to the LDH/MDH superfamily. MDH type 1 family.</text>
</comment>
<keyword id="KW-0025">Alternative splicing</keyword>
<keyword id="KW-0329">Glyoxylate bypass</keyword>
<keyword id="KW-0520">NAD</keyword>
<keyword id="KW-0560">Oxidoreductase</keyword>
<keyword id="KW-0576">Peroxisome</keyword>
<keyword id="KW-1185">Reference proteome</keyword>
<keyword id="KW-0816">Tricarboxylic acid cycle</keyword>